<organism>
    <name type="scientific">Pasteurella multocida (strain Pm70)</name>
    <dbReference type="NCBI Taxonomy" id="272843"/>
    <lineage>
        <taxon>Bacteria</taxon>
        <taxon>Pseudomonadati</taxon>
        <taxon>Pseudomonadota</taxon>
        <taxon>Gammaproteobacteria</taxon>
        <taxon>Pasteurellales</taxon>
        <taxon>Pasteurellaceae</taxon>
        <taxon>Pasteurella</taxon>
    </lineage>
</organism>
<accession>Q9CMA4</accession>
<keyword id="KW-0119">Carbohydrate metabolism</keyword>
<keyword id="KW-0963">Cytoplasm</keyword>
<keyword id="KW-0378">Hydrolase</keyword>
<keyword id="KW-0460">Magnesium</keyword>
<keyword id="KW-0479">Metal-binding</keyword>
<keyword id="KW-1185">Reference proteome</keyword>
<name>F16PA_PASMU</name>
<gene>
    <name evidence="1" type="primary">fbp</name>
    <name type="ordered locus">PM0930</name>
</gene>
<sequence length="333" mass="36862">MKTLGQFIVEKQAEYPNAKGELSGILSSIRLVAKVIHRDINKAGLTNNIIGTSGAENVQGETQMKLDLFAHNTMKQALISREEVAGFASEEEENFVAFDTERGRNAKYVILTDPLDGSSNIDVNVAVGTIFSIYRRVSPIGTPVTLADFMQPGNRQVAAGYIVYGSSTMLVYTTGNGVNGFTYDPSLGVFCLSHENIQIPANGKIYSINEGQYLKFPQGVKKYIKYCQEEDKATHRPYTSRYIGSLVSDFHRNMLKGGIYIYPSATNYPNGKLRLLYEGNPMAFLAEQAGGMASDGYQRILDIQPTELHQRVPLFLGSKEMVEKAQDFMKTFG</sequence>
<reference key="1">
    <citation type="journal article" date="2001" name="Proc. Natl. Acad. Sci. U.S.A.">
        <title>Complete genomic sequence of Pasteurella multocida Pm70.</title>
        <authorList>
            <person name="May B.J."/>
            <person name="Zhang Q."/>
            <person name="Li L.L."/>
            <person name="Paustian M.L."/>
            <person name="Whittam T.S."/>
            <person name="Kapur V."/>
        </authorList>
    </citation>
    <scope>NUCLEOTIDE SEQUENCE [LARGE SCALE GENOMIC DNA]</scope>
    <source>
        <strain>Pm70</strain>
    </source>
</reference>
<dbReference type="EC" id="3.1.3.11" evidence="1"/>
<dbReference type="EMBL" id="AE004439">
    <property type="protein sequence ID" value="AAK03014.1"/>
    <property type="molecule type" value="Genomic_DNA"/>
</dbReference>
<dbReference type="RefSeq" id="WP_010906923.1">
    <property type="nucleotide sequence ID" value="NC_002663.1"/>
</dbReference>
<dbReference type="SMR" id="Q9CMA4"/>
<dbReference type="STRING" id="272843.PM0930"/>
<dbReference type="EnsemblBacteria" id="AAK03014">
    <property type="protein sequence ID" value="AAK03014"/>
    <property type="gene ID" value="PM0930"/>
</dbReference>
<dbReference type="KEGG" id="pmu:PM0930"/>
<dbReference type="PATRIC" id="fig|272843.6.peg.941"/>
<dbReference type="HOGENOM" id="CLU_039977_2_2_6"/>
<dbReference type="OrthoDB" id="9806756at2"/>
<dbReference type="UniPathway" id="UPA00138"/>
<dbReference type="Proteomes" id="UP000000809">
    <property type="component" value="Chromosome"/>
</dbReference>
<dbReference type="GO" id="GO:0005829">
    <property type="term" value="C:cytosol"/>
    <property type="evidence" value="ECO:0007669"/>
    <property type="project" value="TreeGrafter"/>
</dbReference>
<dbReference type="GO" id="GO:0042132">
    <property type="term" value="F:fructose 1,6-bisphosphate 1-phosphatase activity"/>
    <property type="evidence" value="ECO:0007669"/>
    <property type="project" value="UniProtKB-UniRule"/>
</dbReference>
<dbReference type="GO" id="GO:0000287">
    <property type="term" value="F:magnesium ion binding"/>
    <property type="evidence" value="ECO:0007669"/>
    <property type="project" value="UniProtKB-UniRule"/>
</dbReference>
<dbReference type="GO" id="GO:0030388">
    <property type="term" value="P:fructose 1,6-bisphosphate metabolic process"/>
    <property type="evidence" value="ECO:0007669"/>
    <property type="project" value="TreeGrafter"/>
</dbReference>
<dbReference type="GO" id="GO:0006002">
    <property type="term" value="P:fructose 6-phosphate metabolic process"/>
    <property type="evidence" value="ECO:0007669"/>
    <property type="project" value="TreeGrafter"/>
</dbReference>
<dbReference type="GO" id="GO:0006000">
    <property type="term" value="P:fructose metabolic process"/>
    <property type="evidence" value="ECO:0007669"/>
    <property type="project" value="TreeGrafter"/>
</dbReference>
<dbReference type="GO" id="GO:0006094">
    <property type="term" value="P:gluconeogenesis"/>
    <property type="evidence" value="ECO:0007669"/>
    <property type="project" value="UniProtKB-UniRule"/>
</dbReference>
<dbReference type="GO" id="GO:0005986">
    <property type="term" value="P:sucrose biosynthetic process"/>
    <property type="evidence" value="ECO:0007669"/>
    <property type="project" value="TreeGrafter"/>
</dbReference>
<dbReference type="CDD" id="cd00354">
    <property type="entry name" value="FBPase"/>
    <property type="match status" value="1"/>
</dbReference>
<dbReference type="FunFam" id="3.30.540.10:FF:000002">
    <property type="entry name" value="Fructose-1,6-bisphosphatase class 1"/>
    <property type="match status" value="1"/>
</dbReference>
<dbReference type="FunFam" id="3.40.190.80:FF:000001">
    <property type="entry name" value="Fructose-1,6-bisphosphatase class 1"/>
    <property type="match status" value="1"/>
</dbReference>
<dbReference type="Gene3D" id="3.40.190.80">
    <property type="match status" value="1"/>
</dbReference>
<dbReference type="Gene3D" id="3.30.540.10">
    <property type="entry name" value="Fructose-1,6-Bisphosphatase, subunit A, domain 1"/>
    <property type="match status" value="1"/>
</dbReference>
<dbReference type="HAMAP" id="MF_01855">
    <property type="entry name" value="FBPase_class1"/>
    <property type="match status" value="1"/>
</dbReference>
<dbReference type="InterPro" id="IPR044015">
    <property type="entry name" value="FBPase_C_dom"/>
</dbReference>
<dbReference type="InterPro" id="IPR000146">
    <property type="entry name" value="FBPase_class-1"/>
</dbReference>
<dbReference type="InterPro" id="IPR033391">
    <property type="entry name" value="FBPase_N"/>
</dbReference>
<dbReference type="InterPro" id="IPR028343">
    <property type="entry name" value="FBPtase"/>
</dbReference>
<dbReference type="InterPro" id="IPR020548">
    <property type="entry name" value="Fructose_bisphosphatase_AS"/>
</dbReference>
<dbReference type="NCBIfam" id="NF006778">
    <property type="entry name" value="PRK09293.1-1"/>
    <property type="match status" value="1"/>
</dbReference>
<dbReference type="PANTHER" id="PTHR11556">
    <property type="entry name" value="FRUCTOSE-1,6-BISPHOSPHATASE-RELATED"/>
    <property type="match status" value="1"/>
</dbReference>
<dbReference type="PANTHER" id="PTHR11556:SF35">
    <property type="entry name" value="SEDOHEPTULOSE-1,7-BISPHOSPHATASE, CHLOROPLASTIC"/>
    <property type="match status" value="1"/>
</dbReference>
<dbReference type="Pfam" id="PF00316">
    <property type="entry name" value="FBPase"/>
    <property type="match status" value="1"/>
</dbReference>
<dbReference type="Pfam" id="PF18913">
    <property type="entry name" value="FBPase_C"/>
    <property type="match status" value="1"/>
</dbReference>
<dbReference type="PIRSF" id="PIRSF500210">
    <property type="entry name" value="FBPtase"/>
    <property type="match status" value="1"/>
</dbReference>
<dbReference type="PIRSF" id="PIRSF000904">
    <property type="entry name" value="FBPtase_SBPase"/>
    <property type="match status" value="1"/>
</dbReference>
<dbReference type="PRINTS" id="PR00115">
    <property type="entry name" value="F16BPHPHTASE"/>
</dbReference>
<dbReference type="SUPFAM" id="SSF56655">
    <property type="entry name" value="Carbohydrate phosphatase"/>
    <property type="match status" value="1"/>
</dbReference>
<dbReference type="PROSITE" id="PS00124">
    <property type="entry name" value="FBPASE"/>
    <property type="match status" value="1"/>
</dbReference>
<evidence type="ECO:0000255" key="1">
    <source>
        <dbReference type="HAMAP-Rule" id="MF_01855"/>
    </source>
</evidence>
<protein>
    <recommendedName>
        <fullName evidence="1">Fructose-1,6-bisphosphatase class 1</fullName>
        <shortName evidence="1">FBPase class 1</shortName>
        <ecNumber evidence="1">3.1.3.11</ecNumber>
    </recommendedName>
    <alternativeName>
        <fullName evidence="1">D-fructose-1,6-bisphosphate 1-phosphohydrolase class 1</fullName>
    </alternativeName>
</protein>
<feature type="chain" id="PRO_0000364621" description="Fructose-1,6-bisphosphatase class 1">
    <location>
        <begin position="1"/>
        <end position="333"/>
    </location>
</feature>
<feature type="binding site" evidence="1">
    <location>
        <position position="90"/>
    </location>
    <ligand>
        <name>Mg(2+)</name>
        <dbReference type="ChEBI" id="CHEBI:18420"/>
        <label>1</label>
    </ligand>
</feature>
<feature type="binding site" evidence="1">
    <location>
        <position position="113"/>
    </location>
    <ligand>
        <name>Mg(2+)</name>
        <dbReference type="ChEBI" id="CHEBI:18420"/>
        <label>1</label>
    </ligand>
</feature>
<feature type="binding site" evidence="1">
    <location>
        <position position="113"/>
    </location>
    <ligand>
        <name>Mg(2+)</name>
        <dbReference type="ChEBI" id="CHEBI:18420"/>
        <label>2</label>
    </ligand>
</feature>
<feature type="binding site" evidence="1">
    <location>
        <position position="115"/>
    </location>
    <ligand>
        <name>Mg(2+)</name>
        <dbReference type="ChEBI" id="CHEBI:18420"/>
        <label>1</label>
    </ligand>
</feature>
<feature type="binding site" evidence="1">
    <location>
        <begin position="116"/>
        <end position="119"/>
    </location>
    <ligand>
        <name>substrate</name>
    </ligand>
</feature>
<feature type="binding site" evidence="1">
    <location>
        <position position="116"/>
    </location>
    <ligand>
        <name>Mg(2+)</name>
        <dbReference type="ChEBI" id="CHEBI:18420"/>
        <label>2</label>
    </ligand>
</feature>
<feature type="binding site" evidence="1">
    <location>
        <position position="209"/>
    </location>
    <ligand>
        <name>substrate</name>
    </ligand>
</feature>
<feature type="binding site" evidence="1">
    <location>
        <position position="242"/>
    </location>
    <ligand>
        <name>substrate</name>
    </ligand>
</feature>
<feature type="binding site" evidence="1">
    <location>
        <position position="272"/>
    </location>
    <ligand>
        <name>substrate</name>
    </ligand>
</feature>
<feature type="binding site" evidence="1">
    <location>
        <position position="278"/>
    </location>
    <ligand>
        <name>Mg(2+)</name>
        <dbReference type="ChEBI" id="CHEBI:18420"/>
        <label>2</label>
    </ligand>
</feature>
<comment type="catalytic activity">
    <reaction evidence="1">
        <text>beta-D-fructose 1,6-bisphosphate + H2O = beta-D-fructose 6-phosphate + phosphate</text>
        <dbReference type="Rhea" id="RHEA:11064"/>
        <dbReference type="ChEBI" id="CHEBI:15377"/>
        <dbReference type="ChEBI" id="CHEBI:32966"/>
        <dbReference type="ChEBI" id="CHEBI:43474"/>
        <dbReference type="ChEBI" id="CHEBI:57634"/>
        <dbReference type="EC" id="3.1.3.11"/>
    </reaction>
</comment>
<comment type="cofactor">
    <cofactor evidence="1">
        <name>Mg(2+)</name>
        <dbReference type="ChEBI" id="CHEBI:18420"/>
    </cofactor>
    <text evidence="1">Binds 2 magnesium ions per subunit.</text>
</comment>
<comment type="pathway">
    <text evidence="1">Carbohydrate biosynthesis; gluconeogenesis.</text>
</comment>
<comment type="subunit">
    <text evidence="1">Homotetramer.</text>
</comment>
<comment type="subcellular location">
    <subcellularLocation>
        <location evidence="1">Cytoplasm</location>
    </subcellularLocation>
</comment>
<comment type="similarity">
    <text evidence="1">Belongs to the FBPase class 1 family.</text>
</comment>
<proteinExistence type="inferred from homology"/>